<protein>
    <recommendedName>
        <fullName>Formin-like protein 2</fullName>
    </recommendedName>
    <alternativeName>
        <fullName>OsFH2</fullName>
    </alternativeName>
</protein>
<feature type="signal peptide" evidence="1">
    <location>
        <begin position="1"/>
        <end position="19"/>
    </location>
</feature>
<feature type="chain" id="PRO_0000318996" description="Formin-like protein 2">
    <location>
        <begin position="20"/>
        <end position="833"/>
    </location>
</feature>
<feature type="transmembrane region" description="Helical" evidence="1">
    <location>
        <begin position="136"/>
        <end position="156"/>
    </location>
</feature>
<feature type="domain" description="FH2" evidence="2">
    <location>
        <begin position="438"/>
        <end position="833"/>
    </location>
</feature>
<feature type="region of interest" description="Disordered" evidence="3">
    <location>
        <begin position="26"/>
        <end position="130"/>
    </location>
</feature>
<feature type="region of interest" description="Disordered" evidence="3">
    <location>
        <begin position="199"/>
        <end position="234"/>
    </location>
</feature>
<feature type="region of interest" description="Disordered" evidence="3">
    <location>
        <begin position="254"/>
        <end position="326"/>
    </location>
</feature>
<feature type="region of interest" description="Disordered" evidence="3">
    <location>
        <begin position="340"/>
        <end position="435"/>
    </location>
</feature>
<feature type="compositionally biased region" description="Pro residues" evidence="3">
    <location>
        <begin position="77"/>
        <end position="91"/>
    </location>
</feature>
<feature type="compositionally biased region" description="Basic residues" evidence="3">
    <location>
        <begin position="108"/>
        <end position="122"/>
    </location>
</feature>
<feature type="compositionally biased region" description="Low complexity" evidence="3">
    <location>
        <begin position="260"/>
        <end position="271"/>
    </location>
</feature>
<feature type="compositionally biased region" description="Low complexity" evidence="3">
    <location>
        <begin position="310"/>
        <end position="326"/>
    </location>
</feature>
<feature type="compositionally biased region" description="Pro residues" evidence="3">
    <location>
        <begin position="364"/>
        <end position="379"/>
    </location>
</feature>
<feature type="compositionally biased region" description="Pro residues" evidence="3">
    <location>
        <begin position="393"/>
        <end position="409"/>
    </location>
</feature>
<feature type="compositionally biased region" description="Pro residues" evidence="3">
    <location>
        <begin position="420"/>
        <end position="431"/>
    </location>
</feature>
<organism>
    <name type="scientific">Oryza sativa subsp. japonica</name>
    <name type="common">Rice</name>
    <dbReference type="NCBI Taxonomy" id="39947"/>
    <lineage>
        <taxon>Eukaryota</taxon>
        <taxon>Viridiplantae</taxon>
        <taxon>Streptophyta</taxon>
        <taxon>Embryophyta</taxon>
        <taxon>Tracheophyta</taxon>
        <taxon>Spermatophyta</taxon>
        <taxon>Magnoliopsida</taxon>
        <taxon>Liliopsida</taxon>
        <taxon>Poales</taxon>
        <taxon>Poaceae</taxon>
        <taxon>BOP clade</taxon>
        <taxon>Oryzoideae</taxon>
        <taxon>Oryzeae</taxon>
        <taxon>Oryzinae</taxon>
        <taxon>Oryza</taxon>
        <taxon>Oryza sativa</taxon>
    </lineage>
</organism>
<gene>
    <name type="primary">FH2</name>
    <name type="ordered locus">Os04g0461800</name>
    <name type="ordered locus">LOC_Os04g38810</name>
    <name type="ORF">B1358B12.6</name>
    <name type="ORF">OSJNBa0072F16.14</name>
</gene>
<proteinExistence type="evidence at transcript level"/>
<evidence type="ECO:0000255" key="1"/>
<evidence type="ECO:0000255" key="2">
    <source>
        <dbReference type="PROSITE-ProRule" id="PRU00774"/>
    </source>
</evidence>
<evidence type="ECO:0000256" key="3">
    <source>
        <dbReference type="SAM" id="MobiDB-lite"/>
    </source>
</evidence>
<evidence type="ECO:0000305" key="4"/>
<name>FH2_ORYSJ</name>
<reference key="1">
    <citation type="journal article" date="2002" name="Nature">
        <title>Sequence and analysis of rice chromosome 4.</title>
        <authorList>
            <person name="Feng Q."/>
            <person name="Zhang Y."/>
            <person name="Hao P."/>
            <person name="Wang S."/>
            <person name="Fu G."/>
            <person name="Huang Y."/>
            <person name="Li Y."/>
            <person name="Zhu J."/>
            <person name="Liu Y."/>
            <person name="Hu X."/>
            <person name="Jia P."/>
            <person name="Zhang Y."/>
            <person name="Zhao Q."/>
            <person name="Ying K."/>
            <person name="Yu S."/>
            <person name="Tang Y."/>
            <person name="Weng Q."/>
            <person name="Zhang L."/>
            <person name="Lu Y."/>
            <person name="Mu J."/>
            <person name="Lu Y."/>
            <person name="Zhang L.S."/>
            <person name="Yu Z."/>
            <person name="Fan D."/>
            <person name="Liu X."/>
            <person name="Lu T."/>
            <person name="Li C."/>
            <person name="Wu Y."/>
            <person name="Sun T."/>
            <person name="Lei H."/>
            <person name="Li T."/>
            <person name="Hu H."/>
            <person name="Guan J."/>
            <person name="Wu M."/>
            <person name="Zhang R."/>
            <person name="Zhou B."/>
            <person name="Chen Z."/>
            <person name="Chen L."/>
            <person name="Jin Z."/>
            <person name="Wang R."/>
            <person name="Yin H."/>
            <person name="Cai Z."/>
            <person name="Ren S."/>
            <person name="Lv G."/>
            <person name="Gu W."/>
            <person name="Zhu G."/>
            <person name="Tu Y."/>
            <person name="Jia J."/>
            <person name="Zhang Y."/>
            <person name="Chen J."/>
            <person name="Kang H."/>
            <person name="Chen X."/>
            <person name="Shao C."/>
            <person name="Sun Y."/>
            <person name="Hu Q."/>
            <person name="Zhang X."/>
            <person name="Zhang W."/>
            <person name="Wang L."/>
            <person name="Ding C."/>
            <person name="Sheng H."/>
            <person name="Gu J."/>
            <person name="Chen S."/>
            <person name="Ni L."/>
            <person name="Zhu F."/>
            <person name="Chen W."/>
            <person name="Lan L."/>
            <person name="Lai Y."/>
            <person name="Cheng Z."/>
            <person name="Gu M."/>
            <person name="Jiang J."/>
            <person name="Li J."/>
            <person name="Hong G."/>
            <person name="Xue Y."/>
            <person name="Han B."/>
        </authorList>
    </citation>
    <scope>NUCLEOTIDE SEQUENCE [LARGE SCALE GENOMIC DNA]</scope>
    <source>
        <strain>cv. Nipponbare</strain>
    </source>
</reference>
<reference key="2">
    <citation type="journal article" date="2005" name="Nature">
        <title>The map-based sequence of the rice genome.</title>
        <authorList>
            <consortium name="International rice genome sequencing project (IRGSP)"/>
        </authorList>
    </citation>
    <scope>NUCLEOTIDE SEQUENCE [LARGE SCALE GENOMIC DNA]</scope>
    <source>
        <strain>cv. Nipponbare</strain>
    </source>
</reference>
<reference key="3">
    <citation type="journal article" date="2008" name="Nucleic Acids Res.">
        <title>The rice annotation project database (RAP-DB): 2008 update.</title>
        <authorList>
            <consortium name="The rice annotation project (RAP)"/>
        </authorList>
    </citation>
    <scope>GENOME REANNOTATION</scope>
    <source>
        <strain>cv. Nipponbare</strain>
    </source>
</reference>
<reference key="4">
    <citation type="journal article" date="2013" name="Rice">
        <title>Improvement of the Oryza sativa Nipponbare reference genome using next generation sequence and optical map data.</title>
        <authorList>
            <person name="Kawahara Y."/>
            <person name="de la Bastide M."/>
            <person name="Hamilton J.P."/>
            <person name="Kanamori H."/>
            <person name="McCombie W.R."/>
            <person name="Ouyang S."/>
            <person name="Schwartz D.C."/>
            <person name="Tanaka T."/>
            <person name="Wu J."/>
            <person name="Zhou S."/>
            <person name="Childs K.L."/>
            <person name="Davidson R.M."/>
            <person name="Lin H."/>
            <person name="Quesada-Ocampo L."/>
            <person name="Vaillancourt B."/>
            <person name="Sakai H."/>
            <person name="Lee S.S."/>
            <person name="Kim J."/>
            <person name="Numa H."/>
            <person name="Itoh T."/>
            <person name="Buell C.R."/>
            <person name="Matsumoto T."/>
        </authorList>
    </citation>
    <scope>GENOME REANNOTATION</scope>
    <source>
        <strain>cv. Nipponbare</strain>
    </source>
</reference>
<reference key="5">
    <citation type="journal article" date="2003" name="Science">
        <title>Collection, mapping, and annotation of over 28,000 cDNA clones from japonica rice.</title>
        <authorList>
            <consortium name="The rice full-length cDNA consortium"/>
        </authorList>
    </citation>
    <scope>NUCLEOTIDE SEQUENCE [LARGE SCALE MRNA]</scope>
    <source>
        <strain>cv. Nipponbare</strain>
    </source>
</reference>
<reference key="6">
    <citation type="journal article" date="2004" name="BMC Genomics">
        <title>Formin homology 2 domains occur in multiple contexts in angiosperms.</title>
        <authorList>
            <person name="Cvrckova F."/>
            <person name="Novotny M."/>
            <person name="Pickova D."/>
            <person name="Zarsky V."/>
        </authorList>
    </citation>
    <scope>GENE FAMILY</scope>
    <scope>NOMENCLATURE</scope>
</reference>
<dbReference type="EMBL" id="AL606460">
    <property type="protein sequence ID" value="CAD40989.2"/>
    <property type="molecule type" value="Genomic_DNA"/>
</dbReference>
<dbReference type="EMBL" id="BX842605">
    <property type="protein sequence ID" value="CAE75997.1"/>
    <property type="molecule type" value="Genomic_DNA"/>
</dbReference>
<dbReference type="EMBL" id="AP008210">
    <property type="protein sequence ID" value="BAF14912.1"/>
    <property type="molecule type" value="Genomic_DNA"/>
</dbReference>
<dbReference type="EMBL" id="AP014960">
    <property type="protein sequence ID" value="BAS89557.1"/>
    <property type="molecule type" value="Genomic_DNA"/>
</dbReference>
<dbReference type="EMBL" id="AK106770">
    <property type="protein sequence ID" value="BAG97827.1"/>
    <property type="molecule type" value="mRNA"/>
</dbReference>
<dbReference type="RefSeq" id="XP_015634948.1">
    <property type="nucleotide sequence ID" value="XM_015779462.1"/>
</dbReference>
<dbReference type="SMR" id="Q7XUV2"/>
<dbReference type="FunCoup" id="Q7XUV2">
    <property type="interactions" value="5"/>
</dbReference>
<dbReference type="STRING" id="39947.Q7XUV2"/>
<dbReference type="PaxDb" id="39947-Q7XUV2"/>
<dbReference type="EnsemblPlants" id="Os04t0461800-01">
    <property type="protein sequence ID" value="Os04t0461800-01"/>
    <property type="gene ID" value="Os04g0461800"/>
</dbReference>
<dbReference type="Gramene" id="Os04t0461800-01">
    <property type="protein sequence ID" value="Os04t0461800-01"/>
    <property type="gene ID" value="Os04g0461800"/>
</dbReference>
<dbReference type="KEGG" id="dosa:Os04g0461800"/>
<dbReference type="eggNOG" id="KOG1922">
    <property type="taxonomic scope" value="Eukaryota"/>
</dbReference>
<dbReference type="HOGENOM" id="CLU_007699_2_1_1"/>
<dbReference type="InParanoid" id="Q7XUV2"/>
<dbReference type="OMA" id="LKFQSGG"/>
<dbReference type="OrthoDB" id="1668162at2759"/>
<dbReference type="Proteomes" id="UP000000763">
    <property type="component" value="Chromosome 4"/>
</dbReference>
<dbReference type="Proteomes" id="UP000059680">
    <property type="component" value="Chromosome 4"/>
</dbReference>
<dbReference type="GO" id="GO:0005856">
    <property type="term" value="C:cytoskeleton"/>
    <property type="evidence" value="ECO:0000318"/>
    <property type="project" value="GO_Central"/>
</dbReference>
<dbReference type="GO" id="GO:0016020">
    <property type="term" value="C:membrane"/>
    <property type="evidence" value="ECO:0007669"/>
    <property type="project" value="UniProtKB-SubCell"/>
</dbReference>
<dbReference type="GO" id="GO:0051015">
    <property type="term" value="F:actin filament binding"/>
    <property type="evidence" value="ECO:0000318"/>
    <property type="project" value="GO_Central"/>
</dbReference>
<dbReference type="GO" id="GO:0030036">
    <property type="term" value="P:actin cytoskeleton organization"/>
    <property type="evidence" value="ECO:0000318"/>
    <property type="project" value="GO_Central"/>
</dbReference>
<dbReference type="GO" id="GO:0045010">
    <property type="term" value="P:actin nucleation"/>
    <property type="evidence" value="ECO:0007669"/>
    <property type="project" value="InterPro"/>
</dbReference>
<dbReference type="Gene3D" id="1.20.58.2220">
    <property type="entry name" value="Formin, FH2 domain"/>
    <property type="match status" value="1"/>
</dbReference>
<dbReference type="InterPro" id="IPR015425">
    <property type="entry name" value="FH2_Formin"/>
</dbReference>
<dbReference type="InterPro" id="IPR042201">
    <property type="entry name" value="FH2_Formin_sf"/>
</dbReference>
<dbReference type="InterPro" id="IPR027643">
    <property type="entry name" value="Formin-like_plant"/>
</dbReference>
<dbReference type="PANTHER" id="PTHR23213:SF358">
    <property type="entry name" value="FORMIN-LIKE PROTEIN 2"/>
    <property type="match status" value="1"/>
</dbReference>
<dbReference type="PANTHER" id="PTHR23213">
    <property type="entry name" value="FORMIN-RELATED"/>
    <property type="match status" value="1"/>
</dbReference>
<dbReference type="Pfam" id="PF02181">
    <property type="entry name" value="FH2"/>
    <property type="match status" value="1"/>
</dbReference>
<dbReference type="SMART" id="SM00498">
    <property type="entry name" value="FH2"/>
    <property type="match status" value="1"/>
</dbReference>
<dbReference type="SUPFAM" id="SSF101447">
    <property type="entry name" value="Formin homology 2 domain (FH2 domain)"/>
    <property type="match status" value="1"/>
</dbReference>
<dbReference type="PROSITE" id="PS51444">
    <property type="entry name" value="FH2"/>
    <property type="match status" value="1"/>
</dbReference>
<keyword id="KW-0472">Membrane</keyword>
<keyword id="KW-1185">Reference proteome</keyword>
<keyword id="KW-0732">Signal</keyword>
<keyword id="KW-0812">Transmembrane</keyword>
<keyword id="KW-1133">Transmembrane helix</keyword>
<accession>Q7XUV2</accession>
<accession>B7EZN0</accession>
<sequence length="833" mass="88899">MSSSARGITLLCLLLIVSSTVLHFSIGGGSNGEKRRDDGDGDGDDEKVRLLLGANALGERDRRHGHGHGGGVSSAPAPAPAPARAHLPPPLLHKNARLPDPVPGRVGLGHRRGNATAAHRRRSEREGKKSTPLVVVAAGAALSGAAAVLLVVLVVFLACRRFQRRAMPGADQSGTNKVSFDPGPDVFYLDAVKPYVEADHGGGGGVVKTAPELAGPKEEPRCEEEDSGVALSDDGADSVHSSCCFHSSHFSYSELRDTKPGSNGVSPSPSGRSRRRSSAPVTPSEKNKAASPYSPQCPRTPSNRERSSRAHSPSSSVSDLTSVSTSVVKDHEVRRAVHSLMFPEAQSGGAGHVKEDEAESGNMRPPPPPPPPPPPPPPAVTQQQDVKTSCGPAVPPPPPPTPPPPPPLLAPKQQSSGGPILPPAPAPPPLFRPWAPAVGKNGAPLPKLKPLHWDKVRAAPNRRMVWDRIRSSSFELDEKMIESLFGYNARCSTKHEEVQSRSPSLGHHVLDTKRLQNFTILMKAVSATAEQIFAALLHGNGLSAQQLEALIKMAPAKDEADKLSAYDGDVDGLVPAERLLKVVLTIPCAFARVEAMLYRETFADEVGHIRKSFEMLEEACRELMSSKLFLKLLEAVLKTGNRMNVGTARGGAMAFKLDALLKLADVKGTDGKTTLLHFVVQEMTRSRAAEAADIAAGLGAELTNVRKTATVDLDVLTTSVSGLSHGLSRIKELVGSDLSGDERNQCFVAFMAPFVAHAGEVIRELEDGERRVLAHVREITEYYHGDVGKDEASPLRIFVIVRDFLGMLERVCKEVRGAKNCHGGNPALNLNNV</sequence>
<comment type="subcellular location">
    <subcellularLocation>
        <location evidence="4">Membrane</location>
        <topology evidence="4">Single-pass membrane protein</topology>
    </subcellularLocation>
</comment>
<comment type="similarity">
    <text evidence="4">Belongs to the formin-like family. Class-I subfamily.</text>
</comment>